<dbReference type="EMBL" id="CP000656">
    <property type="protein sequence ID" value="ABP45604.1"/>
    <property type="molecule type" value="Genomic_DNA"/>
</dbReference>
<dbReference type="SMR" id="A4TB05"/>
<dbReference type="STRING" id="350054.Mflv_3127"/>
<dbReference type="KEGG" id="mgi:Mflv_3127"/>
<dbReference type="eggNOG" id="COG1742">
    <property type="taxonomic scope" value="Bacteria"/>
</dbReference>
<dbReference type="HOGENOM" id="CLU_117653_0_1_11"/>
<dbReference type="OrthoDB" id="123240at2"/>
<dbReference type="GO" id="GO:0005886">
    <property type="term" value="C:plasma membrane"/>
    <property type="evidence" value="ECO:0007669"/>
    <property type="project" value="UniProtKB-SubCell"/>
</dbReference>
<dbReference type="HAMAP" id="MF_00010">
    <property type="entry name" value="UPF0060"/>
    <property type="match status" value="1"/>
</dbReference>
<dbReference type="InterPro" id="IPR003844">
    <property type="entry name" value="UPF0060"/>
</dbReference>
<dbReference type="NCBIfam" id="NF002586">
    <property type="entry name" value="PRK02237.1"/>
    <property type="match status" value="1"/>
</dbReference>
<dbReference type="PANTHER" id="PTHR36116">
    <property type="entry name" value="UPF0060 MEMBRANE PROTEIN YNFA"/>
    <property type="match status" value="1"/>
</dbReference>
<dbReference type="PANTHER" id="PTHR36116:SF1">
    <property type="entry name" value="UPF0060 MEMBRANE PROTEIN YNFA"/>
    <property type="match status" value="1"/>
</dbReference>
<dbReference type="Pfam" id="PF02694">
    <property type="entry name" value="UPF0060"/>
    <property type="match status" value="1"/>
</dbReference>
<dbReference type="SUPFAM" id="SSF103481">
    <property type="entry name" value="Multidrug resistance efflux transporter EmrE"/>
    <property type="match status" value="1"/>
</dbReference>
<accession>A4TB05</accession>
<evidence type="ECO:0000255" key="1">
    <source>
        <dbReference type="HAMAP-Rule" id="MF_00010"/>
    </source>
</evidence>
<organism>
    <name type="scientific">Mycolicibacterium gilvum (strain PYR-GCK)</name>
    <name type="common">Mycobacterium gilvum (strain PYR-GCK)</name>
    <dbReference type="NCBI Taxonomy" id="350054"/>
    <lineage>
        <taxon>Bacteria</taxon>
        <taxon>Bacillati</taxon>
        <taxon>Actinomycetota</taxon>
        <taxon>Actinomycetes</taxon>
        <taxon>Mycobacteriales</taxon>
        <taxon>Mycobacteriaceae</taxon>
        <taxon>Mycolicibacterium</taxon>
    </lineage>
</organism>
<gene>
    <name type="ordered locus">Mflv_3127</name>
</gene>
<reference key="1">
    <citation type="submission" date="2007-04" db="EMBL/GenBank/DDBJ databases">
        <title>Complete sequence of chromosome of Mycobacterium gilvum PYR-GCK.</title>
        <authorList>
            <consortium name="US DOE Joint Genome Institute"/>
            <person name="Copeland A."/>
            <person name="Lucas S."/>
            <person name="Lapidus A."/>
            <person name="Barry K."/>
            <person name="Detter J.C."/>
            <person name="Glavina del Rio T."/>
            <person name="Hammon N."/>
            <person name="Israni S."/>
            <person name="Dalin E."/>
            <person name="Tice H."/>
            <person name="Pitluck S."/>
            <person name="Chain P."/>
            <person name="Malfatti S."/>
            <person name="Shin M."/>
            <person name="Vergez L."/>
            <person name="Schmutz J."/>
            <person name="Larimer F."/>
            <person name="Land M."/>
            <person name="Hauser L."/>
            <person name="Kyrpides N."/>
            <person name="Mikhailova N."/>
            <person name="Miller C."/>
            <person name="Richardson P."/>
        </authorList>
    </citation>
    <scope>NUCLEOTIDE SEQUENCE [LARGE SCALE GENOMIC DNA]</scope>
    <source>
        <strain>PYR-GCK</strain>
    </source>
</reference>
<name>Y3127_MYCGI</name>
<proteinExistence type="inferred from homology"/>
<sequence>MVVKSALLFVLAAVLEIGGAWLVWQGFREHRGWLWVGAGVLALGAYGFVAAFQPDANFGRVLAAYGGVFVAGSLIWGMVADGFRPDRWDITGAAVCLLGVVLIMYAPR</sequence>
<comment type="subcellular location">
    <subcellularLocation>
        <location evidence="1">Cell membrane</location>
        <topology evidence="1">Multi-pass membrane protein</topology>
    </subcellularLocation>
</comment>
<comment type="similarity">
    <text evidence="1">Belongs to the UPF0060 family.</text>
</comment>
<feature type="chain" id="PRO_1000073930" description="UPF0060 membrane protein Mflv_3127">
    <location>
        <begin position="1"/>
        <end position="108"/>
    </location>
</feature>
<feature type="transmembrane region" description="Helical" evidence="1">
    <location>
        <begin position="7"/>
        <end position="27"/>
    </location>
</feature>
<feature type="transmembrane region" description="Helical" evidence="1">
    <location>
        <begin position="32"/>
        <end position="52"/>
    </location>
</feature>
<feature type="transmembrane region" description="Helical" evidence="1">
    <location>
        <begin position="61"/>
        <end position="81"/>
    </location>
</feature>
<feature type="transmembrane region" description="Helical" evidence="1">
    <location>
        <begin position="87"/>
        <end position="107"/>
    </location>
</feature>
<protein>
    <recommendedName>
        <fullName evidence="1">UPF0060 membrane protein Mflv_3127</fullName>
    </recommendedName>
</protein>
<keyword id="KW-1003">Cell membrane</keyword>
<keyword id="KW-0472">Membrane</keyword>
<keyword id="KW-0812">Transmembrane</keyword>
<keyword id="KW-1133">Transmembrane helix</keyword>